<evidence type="ECO:0000250" key="1">
    <source>
        <dbReference type="UniProtKB" id="P0AC13"/>
    </source>
</evidence>
<evidence type="ECO:0000250" key="2">
    <source>
        <dbReference type="UniProtKB" id="P9WND1"/>
    </source>
</evidence>
<evidence type="ECO:0000255" key="3">
    <source>
        <dbReference type="PROSITE-ProRule" id="PRU00334"/>
    </source>
</evidence>
<evidence type="ECO:0000305" key="4"/>
<name>FOLKP_CHLTR</name>
<keyword id="KW-0067">ATP-binding</keyword>
<keyword id="KW-0289">Folate biosynthesis</keyword>
<keyword id="KW-0418">Kinase</keyword>
<keyword id="KW-0460">Magnesium</keyword>
<keyword id="KW-0479">Metal-binding</keyword>
<keyword id="KW-0511">Multifunctional enzyme</keyword>
<keyword id="KW-0547">Nucleotide-binding</keyword>
<keyword id="KW-1185">Reference proteome</keyword>
<keyword id="KW-0808">Transferase</keyword>
<organism>
    <name type="scientific">Chlamydia trachomatis serovar D (strain ATCC VR-885 / DSM 19411 / UW-3/Cx)</name>
    <dbReference type="NCBI Taxonomy" id="272561"/>
    <lineage>
        <taxon>Bacteria</taxon>
        <taxon>Pseudomonadati</taxon>
        <taxon>Chlamydiota</taxon>
        <taxon>Chlamydiia</taxon>
        <taxon>Chlamydiales</taxon>
        <taxon>Chlamydiaceae</taxon>
        <taxon>Chlamydia/Chlamydophila group</taxon>
        <taxon>Chlamydia</taxon>
    </lineage>
</organism>
<dbReference type="EC" id="2.7.6.3"/>
<dbReference type="EC" id="2.5.1.15"/>
<dbReference type="EMBL" id="AE001273">
    <property type="protein sequence ID" value="AAC68216.1"/>
    <property type="molecule type" value="Genomic_DNA"/>
</dbReference>
<dbReference type="PIR" id="A71494">
    <property type="entry name" value="A71494"/>
</dbReference>
<dbReference type="SMR" id="O84619"/>
<dbReference type="FunCoup" id="O84619">
    <property type="interactions" value="208"/>
</dbReference>
<dbReference type="STRING" id="272561.CT_613"/>
<dbReference type="EnsemblBacteria" id="AAC68216">
    <property type="protein sequence ID" value="AAC68216"/>
    <property type="gene ID" value="CT_613"/>
</dbReference>
<dbReference type="KEGG" id="ctr:CT_613"/>
<dbReference type="PATRIC" id="fig|272561.5.peg.670"/>
<dbReference type="HOGENOM" id="CLU_008023_2_2_0"/>
<dbReference type="InParanoid" id="O84619"/>
<dbReference type="OrthoDB" id="9811744at2"/>
<dbReference type="BioCyc" id="MetaCyc:MONOMER-18794"/>
<dbReference type="UniPathway" id="UPA00077">
    <property type="reaction ID" value="UER00155"/>
</dbReference>
<dbReference type="UniPathway" id="UPA00077">
    <property type="reaction ID" value="UER00156"/>
</dbReference>
<dbReference type="Proteomes" id="UP000000431">
    <property type="component" value="Chromosome"/>
</dbReference>
<dbReference type="GO" id="GO:0005829">
    <property type="term" value="C:cytosol"/>
    <property type="evidence" value="ECO:0000318"/>
    <property type="project" value="GO_Central"/>
</dbReference>
<dbReference type="GO" id="GO:0003848">
    <property type="term" value="F:2-amino-4-hydroxy-6-hydroxymethyldihydropteridine diphosphokinase activity"/>
    <property type="evidence" value="ECO:0007669"/>
    <property type="project" value="UniProtKB-EC"/>
</dbReference>
<dbReference type="GO" id="GO:0005524">
    <property type="term" value="F:ATP binding"/>
    <property type="evidence" value="ECO:0007669"/>
    <property type="project" value="UniProtKB-KW"/>
</dbReference>
<dbReference type="GO" id="GO:0004156">
    <property type="term" value="F:dihydropteroate synthase activity"/>
    <property type="evidence" value="ECO:0000318"/>
    <property type="project" value="GO_Central"/>
</dbReference>
<dbReference type="GO" id="GO:0016301">
    <property type="term" value="F:kinase activity"/>
    <property type="evidence" value="ECO:0007669"/>
    <property type="project" value="UniProtKB-KW"/>
</dbReference>
<dbReference type="GO" id="GO:0046872">
    <property type="term" value="F:metal ion binding"/>
    <property type="evidence" value="ECO:0007669"/>
    <property type="project" value="UniProtKB-KW"/>
</dbReference>
<dbReference type="GO" id="GO:0046656">
    <property type="term" value="P:folic acid biosynthetic process"/>
    <property type="evidence" value="ECO:0007669"/>
    <property type="project" value="UniProtKB-KW"/>
</dbReference>
<dbReference type="GO" id="GO:0046654">
    <property type="term" value="P:tetrahydrofolate biosynthetic process"/>
    <property type="evidence" value="ECO:0000318"/>
    <property type="project" value="GO_Central"/>
</dbReference>
<dbReference type="CDD" id="cd00739">
    <property type="entry name" value="DHPS"/>
    <property type="match status" value="1"/>
</dbReference>
<dbReference type="CDD" id="cd00483">
    <property type="entry name" value="HPPK"/>
    <property type="match status" value="1"/>
</dbReference>
<dbReference type="FunFam" id="3.20.20.20:FF:000015">
    <property type="entry name" value="Probable bifunctional folylpolyglutamate synthase/dihydropteroate synthase"/>
    <property type="match status" value="1"/>
</dbReference>
<dbReference type="Gene3D" id="3.30.70.560">
    <property type="entry name" value="7,8-Dihydro-6-hydroxymethylpterin-pyrophosphokinase HPPK"/>
    <property type="match status" value="1"/>
</dbReference>
<dbReference type="Gene3D" id="3.20.20.20">
    <property type="entry name" value="Dihydropteroate synthase-like"/>
    <property type="match status" value="1"/>
</dbReference>
<dbReference type="InterPro" id="IPR045031">
    <property type="entry name" value="DHP_synth-like"/>
</dbReference>
<dbReference type="InterPro" id="IPR006390">
    <property type="entry name" value="DHP_synth_dom"/>
</dbReference>
<dbReference type="InterPro" id="IPR011005">
    <property type="entry name" value="Dihydropteroate_synth-like_sf"/>
</dbReference>
<dbReference type="InterPro" id="IPR000550">
    <property type="entry name" value="Hppk"/>
</dbReference>
<dbReference type="InterPro" id="IPR035907">
    <property type="entry name" value="Hppk_sf"/>
</dbReference>
<dbReference type="InterPro" id="IPR000489">
    <property type="entry name" value="Pterin-binding_dom"/>
</dbReference>
<dbReference type="NCBIfam" id="TIGR01496">
    <property type="entry name" value="DHPS"/>
    <property type="match status" value="1"/>
</dbReference>
<dbReference type="NCBIfam" id="TIGR01498">
    <property type="entry name" value="folK"/>
    <property type="match status" value="1"/>
</dbReference>
<dbReference type="PANTHER" id="PTHR20941">
    <property type="entry name" value="FOLATE SYNTHESIS PROTEINS"/>
    <property type="match status" value="1"/>
</dbReference>
<dbReference type="PANTHER" id="PTHR20941:SF1">
    <property type="entry name" value="FOLIC ACID SYNTHESIS PROTEIN FOL1"/>
    <property type="match status" value="1"/>
</dbReference>
<dbReference type="Pfam" id="PF01288">
    <property type="entry name" value="HPPK"/>
    <property type="match status" value="1"/>
</dbReference>
<dbReference type="Pfam" id="PF00809">
    <property type="entry name" value="Pterin_bind"/>
    <property type="match status" value="1"/>
</dbReference>
<dbReference type="SUPFAM" id="SSF55083">
    <property type="entry name" value="6-hydroxymethyl-7,8-dihydropterin pyrophosphokinase, HPPK"/>
    <property type="match status" value="1"/>
</dbReference>
<dbReference type="SUPFAM" id="SSF51717">
    <property type="entry name" value="Dihydropteroate synthetase-like"/>
    <property type="match status" value="1"/>
</dbReference>
<dbReference type="PROSITE" id="PS00792">
    <property type="entry name" value="DHPS_1"/>
    <property type="match status" value="1"/>
</dbReference>
<dbReference type="PROSITE" id="PS00793">
    <property type="entry name" value="DHPS_2"/>
    <property type="match status" value="1"/>
</dbReference>
<dbReference type="PROSITE" id="PS00794">
    <property type="entry name" value="HPPK"/>
    <property type="match status" value="1"/>
</dbReference>
<dbReference type="PROSITE" id="PS50972">
    <property type="entry name" value="PTERIN_BINDING"/>
    <property type="match status" value="1"/>
</dbReference>
<gene>
    <name type="primary">folKP</name>
    <name type="ordered locus">CT_613</name>
</gene>
<accession>O84619</accession>
<comment type="catalytic activity">
    <reaction>
        <text>6-hydroxymethyl-7,8-dihydropterin + ATP = (7,8-dihydropterin-6-yl)methyl diphosphate + AMP + H(+)</text>
        <dbReference type="Rhea" id="RHEA:11412"/>
        <dbReference type="ChEBI" id="CHEBI:15378"/>
        <dbReference type="ChEBI" id="CHEBI:30616"/>
        <dbReference type="ChEBI" id="CHEBI:44841"/>
        <dbReference type="ChEBI" id="CHEBI:72950"/>
        <dbReference type="ChEBI" id="CHEBI:456215"/>
        <dbReference type="EC" id="2.7.6.3"/>
    </reaction>
</comment>
<comment type="catalytic activity">
    <reaction>
        <text>(7,8-dihydropterin-6-yl)methyl diphosphate + 4-aminobenzoate = 7,8-dihydropteroate + diphosphate</text>
        <dbReference type="Rhea" id="RHEA:19949"/>
        <dbReference type="ChEBI" id="CHEBI:17836"/>
        <dbReference type="ChEBI" id="CHEBI:17839"/>
        <dbReference type="ChEBI" id="CHEBI:33019"/>
        <dbReference type="ChEBI" id="CHEBI:72950"/>
        <dbReference type="EC" id="2.5.1.15"/>
    </reaction>
</comment>
<comment type="cofactor">
    <cofactor evidence="1">
        <name>Mg(2+)</name>
        <dbReference type="ChEBI" id="CHEBI:18420"/>
    </cofactor>
</comment>
<comment type="pathway">
    <text>Cofactor biosynthesis; tetrahydrofolate biosynthesis; 2-amino-4-hydroxy-6-hydroxymethyl-7,8-dihydropteridine diphosphate from 7,8-dihydroneopterin triphosphate: step 4/4.</text>
</comment>
<comment type="pathway">
    <text>Cofactor biosynthesis; tetrahydrofolate biosynthesis; 7,8-dihydrofolate from 2-amino-4-hydroxy-6-hydroxymethyl-7,8-dihydropteridine diphosphate and 4-aminobenzoate: step 1/2.</text>
</comment>
<comment type="similarity">
    <text evidence="4">In the C-terminal section; belongs to the DHPS family.</text>
</comment>
<comment type="similarity">
    <text evidence="4">In the N-terminal section; belongs to the HPPK family.</text>
</comment>
<proteinExistence type="inferred from homology"/>
<protein>
    <recommendedName>
        <fullName>Folate synthesis bifunctional protein</fullName>
    </recommendedName>
    <domain>
        <recommendedName>
            <fullName>6-hydroxymethyl-7,8-dihydropterin pyrophosphokinase</fullName>
            <shortName>HPPK</shortName>
            <ecNumber>2.7.6.3</ecNumber>
        </recommendedName>
        <alternativeName>
            <fullName>2-amino-4-hydroxy-6-hydroxymethyldihydropteridine pyrophosphokinase</fullName>
        </alternativeName>
        <alternativeName>
            <fullName>7,8-dihydro-6-hydroxymethylpterin-pyrophosphokinase</fullName>
            <shortName>PPPK</shortName>
        </alternativeName>
    </domain>
    <domain>
        <recommendedName>
            <fullName>Dihydropteroate synthase</fullName>
            <shortName>DHPS</shortName>
            <ecNumber>2.5.1.15</ecNumber>
        </recommendedName>
        <alternativeName>
            <fullName>Dihydropteroate pyrophosphorylase</fullName>
        </alternativeName>
    </domain>
</protein>
<feature type="chain" id="PRO_0000168241" description="Folate synthesis bifunctional protein">
    <location>
        <begin position="1"/>
        <end position="450"/>
    </location>
</feature>
<feature type="domain" description="Pterin-binding" evidence="3">
    <location>
        <begin position="180"/>
        <end position="441"/>
    </location>
</feature>
<feature type="region of interest" description="HPPK">
    <location>
        <begin position="1"/>
        <end position="166"/>
    </location>
</feature>
<feature type="region of interest" description="DHPS">
    <location>
        <begin position="182"/>
        <end position="450"/>
    </location>
</feature>
<feature type="binding site" evidence="2">
    <location>
        <position position="187"/>
    </location>
    <ligand>
        <name>Mg(2+)</name>
        <dbReference type="ChEBI" id="CHEBI:18420"/>
    </ligand>
</feature>
<feature type="binding site" evidence="1">
    <location>
        <position position="227"/>
    </location>
    <ligand>
        <name>(7,8-dihydropterin-6-yl)methyl diphosphate</name>
        <dbReference type="ChEBI" id="CHEBI:72950"/>
    </ligand>
</feature>
<feature type="binding site" evidence="1">
    <location>
        <position position="267"/>
    </location>
    <ligand>
        <name>(7,8-dihydropterin-6-yl)methyl diphosphate</name>
        <dbReference type="ChEBI" id="CHEBI:72950"/>
    </ligand>
</feature>
<feature type="binding site" evidence="1">
    <location>
        <position position="287"/>
    </location>
    <ligand>
        <name>(7,8-dihydropterin-6-yl)methyl diphosphate</name>
        <dbReference type="ChEBI" id="CHEBI:72950"/>
    </ligand>
</feature>
<feature type="binding site" evidence="1">
    <location>
        <position position="358"/>
    </location>
    <ligand>
        <name>(7,8-dihydropterin-6-yl)methyl diphosphate</name>
        <dbReference type="ChEBI" id="CHEBI:72950"/>
    </ligand>
</feature>
<feature type="binding site" evidence="1">
    <location>
        <position position="395"/>
    </location>
    <ligand>
        <name>(7,8-dihydropterin-6-yl)methyl diphosphate</name>
        <dbReference type="ChEBI" id="CHEBI:72950"/>
    </ligand>
</feature>
<feature type="binding site" evidence="1">
    <location>
        <begin position="429"/>
        <end position="431"/>
    </location>
    <ligand>
        <name>(7,8-dihydropterin-6-yl)methyl diphosphate</name>
        <dbReference type="ChEBI" id="CHEBI:72950"/>
    </ligand>
</feature>
<sequence>MTSWNFVCLSLGSNLGNRHEHIRRAYASLKKAGIRNLKSSVILETKALLLEGAPKEWDLPYFNSVVIGETQLSPDELIEEIKMIESRFGQDASLKWGPRPIDIDVLFYGDEAFSYHSDKCTIPHPKVLERPFLLSMIASLCPYRRFRLEGSSCNGKTFAELAAIYPLTEEDALGSFGSATQIMGIVNITDNSISDTGLFLEARRAAAHAERLFAEGASIIDLGAQATNPRVKDLGSVEQEWERLEPVLRLLAERWGAAQQCPDVSIDTFRPEIIRRAVEVFPIRWINDVSGGSLEMAHLAKEFGLRLLINHSCSLPPRPDCVLSYEESPIEQMLRWGESQLEQFAQVGLDTSWQVVFDPGIGFGKTPVQSMLLMDGVKQFKRVLECPVLIGHSRKSCLSMLGRFNSNDRDWETIGCSVSLHDRGVDYLRVHQVEGNRRALAAAAWAGMFV</sequence>
<reference key="1">
    <citation type="journal article" date="1998" name="Science">
        <title>Genome sequence of an obligate intracellular pathogen of humans: Chlamydia trachomatis.</title>
        <authorList>
            <person name="Stephens R.S."/>
            <person name="Kalman S."/>
            <person name="Lammel C.J."/>
            <person name="Fan J."/>
            <person name="Marathe R."/>
            <person name="Aravind L."/>
            <person name="Mitchell W.P."/>
            <person name="Olinger L."/>
            <person name="Tatusov R.L."/>
            <person name="Zhao Q."/>
            <person name="Koonin E.V."/>
            <person name="Davis R.W."/>
        </authorList>
    </citation>
    <scope>NUCLEOTIDE SEQUENCE [LARGE SCALE GENOMIC DNA]</scope>
    <source>
        <strain>ATCC VR-885 / DSM 19411 / UW-3/Cx</strain>
    </source>
</reference>